<dbReference type="EMBL" id="AF039231">
    <property type="protein sequence ID" value="AAB96677.1"/>
    <property type="molecule type" value="mRNA"/>
</dbReference>
<dbReference type="EMBL" id="U72492">
    <property type="protein sequence ID" value="AAB92662.1"/>
    <property type="molecule type" value="mRNA"/>
</dbReference>
<dbReference type="EMBL" id="D84437">
    <property type="protein sequence ID" value="BAA12663.1"/>
    <property type="molecule type" value="mRNA"/>
</dbReference>
<dbReference type="EMBL" id="D84438">
    <property type="protein sequence ID" value="BAA12664.1"/>
    <property type="molecule type" value="mRNA"/>
</dbReference>
<dbReference type="EMBL" id="AF220176">
    <property type="protein sequence ID" value="AAG28587.1"/>
    <property type="molecule type" value="mRNA"/>
</dbReference>
<dbReference type="EMBL" id="AF220177">
    <property type="protein sequence ID" value="AAG28588.1"/>
    <property type="molecule type" value="mRNA"/>
</dbReference>
<dbReference type="EMBL" id="AF220178">
    <property type="protein sequence ID" value="AAG28589.1"/>
    <property type="molecule type" value="mRNA"/>
</dbReference>
<dbReference type="EMBL" id="AF220179">
    <property type="protein sequence ID" value="AAG28590.1"/>
    <property type="molecule type" value="mRNA"/>
</dbReference>
<dbReference type="EMBL" id="AF220180">
    <property type="protein sequence ID" value="AAG28591.1"/>
    <property type="molecule type" value="mRNA"/>
</dbReference>
<dbReference type="EMBL" id="AF220181">
    <property type="protein sequence ID" value="AAG28592.1"/>
    <property type="molecule type" value="mRNA"/>
</dbReference>
<dbReference type="EMBL" id="AE014297">
    <property type="protein sequence ID" value="AAF55562.2"/>
    <property type="molecule type" value="Genomic_DNA"/>
</dbReference>
<dbReference type="EMBL" id="AE014297">
    <property type="protein sequence ID" value="AAF55563.2"/>
    <property type="molecule type" value="Genomic_DNA"/>
</dbReference>
<dbReference type="EMBL" id="AE014297">
    <property type="protein sequence ID" value="AAF55564.2"/>
    <property type="molecule type" value="Genomic_DNA"/>
</dbReference>
<dbReference type="EMBL" id="AE014297">
    <property type="protein sequence ID" value="AAF55565.2"/>
    <property type="molecule type" value="Genomic_DNA"/>
</dbReference>
<dbReference type="EMBL" id="AE014297">
    <property type="protein sequence ID" value="AAN13774.1"/>
    <property type="molecule type" value="Genomic_DNA"/>
</dbReference>
<dbReference type="EMBL" id="AE014297">
    <property type="protein sequence ID" value="AAN13775.1"/>
    <property type="molecule type" value="Genomic_DNA"/>
</dbReference>
<dbReference type="EMBL" id="AE014297">
    <property type="protein sequence ID" value="AAN13776.1"/>
    <property type="molecule type" value="Genomic_DNA"/>
</dbReference>
<dbReference type="EMBL" id="AE014297">
    <property type="protein sequence ID" value="AAN13777.1"/>
    <property type="molecule type" value="Genomic_DNA"/>
</dbReference>
<dbReference type="EMBL" id="AE014297">
    <property type="protein sequence ID" value="AAS65172.1"/>
    <property type="molecule type" value="Genomic_DNA"/>
</dbReference>
<dbReference type="EMBL" id="AE014297">
    <property type="protein sequence ID" value="AAS65173.1"/>
    <property type="molecule type" value="Genomic_DNA"/>
</dbReference>
<dbReference type="EMBL" id="AE014297">
    <property type="protein sequence ID" value="AAS65174.1"/>
    <property type="molecule type" value="Genomic_DNA"/>
</dbReference>
<dbReference type="EMBL" id="AE014297">
    <property type="protein sequence ID" value="AAS65175.1"/>
    <property type="molecule type" value="Genomic_DNA"/>
</dbReference>
<dbReference type="EMBL" id="AE014297">
    <property type="protein sequence ID" value="AAS65176.1"/>
    <property type="molecule type" value="Genomic_DNA"/>
</dbReference>
<dbReference type="EMBL" id="BT024450">
    <property type="protein sequence ID" value="ABC86512.1"/>
    <property type="molecule type" value="mRNA"/>
</dbReference>
<dbReference type="EMBL" id="AY152837">
    <property type="protein sequence ID" value="AAN74532.1"/>
    <property type="molecule type" value="mRNA"/>
</dbReference>
<dbReference type="EMBL" id="AY152838">
    <property type="protein sequence ID" value="AAN74533.1"/>
    <property type="molecule type" value="mRNA"/>
</dbReference>
<dbReference type="EMBL" id="U14403">
    <property type="protein sequence ID" value="AAA50838.1"/>
    <property type="molecule type" value="Genomic_DNA"/>
</dbReference>
<dbReference type="RefSeq" id="NP_001163648.1">
    <property type="nucleotide sequence ID" value="NM_001170177.2"/>
</dbReference>
<dbReference type="RefSeq" id="NP_524397.2">
    <molecule id="Q8IN81-7"/>
    <property type="nucleotide sequence ID" value="NM_079673.3"/>
</dbReference>
<dbReference type="RefSeq" id="NP_732344.1">
    <molecule id="Q8IN81-6"/>
    <property type="nucleotide sequence ID" value="NM_169816.2"/>
</dbReference>
<dbReference type="RefSeq" id="NP_732345.1">
    <molecule id="Q8IN81-12"/>
    <property type="nucleotide sequence ID" value="NM_169817.2"/>
</dbReference>
<dbReference type="RefSeq" id="NP_732346.1">
    <molecule id="Q8IN81-10"/>
    <property type="nucleotide sequence ID" value="NM_169818.2"/>
</dbReference>
<dbReference type="RefSeq" id="NP_732347.1">
    <molecule id="Q8IN81-1"/>
    <property type="nucleotide sequence ID" value="NM_169819.2"/>
</dbReference>
<dbReference type="RefSeq" id="NP_732348.1">
    <molecule id="Q8IN81-4"/>
    <property type="nucleotide sequence ID" value="NM_169820.2"/>
</dbReference>
<dbReference type="RefSeq" id="NP_732349.1">
    <molecule id="Q8IN81-9"/>
    <property type="nucleotide sequence ID" value="NM_169821.2"/>
</dbReference>
<dbReference type="RefSeq" id="NP_732350.1">
    <molecule id="Q8IN81-8"/>
    <property type="nucleotide sequence ID" value="NM_169822.2"/>
</dbReference>
<dbReference type="RefSeq" id="NP_996234.1">
    <molecule id="Q8IN81-4"/>
    <property type="nucleotide sequence ID" value="NM_206512.2"/>
</dbReference>
<dbReference type="RefSeq" id="NP_996235.1">
    <molecule id="Q8IN81-4"/>
    <property type="nucleotide sequence ID" value="NM_206513.2"/>
</dbReference>
<dbReference type="RefSeq" id="NP_996236.1">
    <molecule id="Q8IN81-15"/>
    <property type="nucleotide sequence ID" value="NM_206514.2"/>
</dbReference>
<dbReference type="RefSeq" id="NP_996237.1">
    <molecule id="Q8IN81-14"/>
    <property type="nucleotide sequence ID" value="NM_206515.2"/>
</dbReference>
<dbReference type="RefSeq" id="NP_996238.1">
    <molecule id="Q8IN81-13"/>
    <property type="nucleotide sequence ID" value="NM_206516.2"/>
</dbReference>
<dbReference type="SMR" id="Q8IN81"/>
<dbReference type="BioGRID" id="67237">
    <property type="interactions" value="36"/>
</dbReference>
<dbReference type="DIP" id="DIP-17120N"/>
<dbReference type="FunCoup" id="Q8IN81">
    <property type="interactions" value="314"/>
</dbReference>
<dbReference type="IntAct" id="Q8IN81">
    <property type="interactions" value="6"/>
</dbReference>
<dbReference type="STRING" id="7227.FBpp0290499"/>
<dbReference type="PaxDb" id="7227-FBpp0290499"/>
<dbReference type="PeptideAtlas" id="Q8IN81"/>
<dbReference type="EnsemblMetazoa" id="FBtr0083640">
    <molecule id="Q8IN81-10"/>
    <property type="protein sequence ID" value="FBpp0083060"/>
    <property type="gene ID" value="FBgn0004652"/>
</dbReference>
<dbReference type="EnsemblMetazoa" id="FBtr0083641">
    <molecule id="Q8IN81-6"/>
    <property type="protein sequence ID" value="FBpp0083061"/>
    <property type="gene ID" value="FBgn0004652"/>
</dbReference>
<dbReference type="EnsemblMetazoa" id="FBtr0083642">
    <molecule id="Q8IN81-4"/>
    <property type="protein sequence ID" value="FBpp0083062"/>
    <property type="gene ID" value="FBgn0004652"/>
</dbReference>
<dbReference type="EnsemblMetazoa" id="FBtr0083643">
    <molecule id="Q8IN81-1"/>
    <property type="protein sequence ID" value="FBpp0083063"/>
    <property type="gene ID" value="FBgn0004652"/>
</dbReference>
<dbReference type="EnsemblMetazoa" id="FBtr0083644">
    <molecule id="Q8IN81-7"/>
    <property type="protein sequence ID" value="FBpp0083064"/>
    <property type="gene ID" value="FBgn0004652"/>
</dbReference>
<dbReference type="EnsemblMetazoa" id="FBtr0083645">
    <molecule id="Q8IN81-12"/>
    <property type="protein sequence ID" value="FBpp0083065"/>
    <property type="gene ID" value="FBgn0004652"/>
</dbReference>
<dbReference type="EnsemblMetazoa" id="FBtr0083646">
    <molecule id="Q8IN81-9"/>
    <property type="protein sequence ID" value="FBpp0083066"/>
    <property type="gene ID" value="FBgn0004652"/>
</dbReference>
<dbReference type="EnsemblMetazoa" id="FBtr0083647">
    <molecule id="Q8IN81-8"/>
    <property type="protein sequence ID" value="FBpp0083067"/>
    <property type="gene ID" value="FBgn0004652"/>
</dbReference>
<dbReference type="EnsemblMetazoa" id="FBtr0083648">
    <molecule id="Q8IN81-13"/>
    <property type="protein sequence ID" value="FBpp0089355"/>
    <property type="gene ID" value="FBgn0004652"/>
</dbReference>
<dbReference type="EnsemblMetazoa" id="FBtr0083649">
    <molecule id="Q8IN81-14"/>
    <property type="protein sequence ID" value="FBpp0089356"/>
    <property type="gene ID" value="FBgn0004652"/>
</dbReference>
<dbReference type="EnsemblMetazoa" id="FBtr0083650">
    <molecule id="Q8IN81-15"/>
    <property type="protein sequence ID" value="FBpp0089357"/>
    <property type="gene ID" value="FBgn0004652"/>
</dbReference>
<dbReference type="EnsemblMetazoa" id="FBtr0083651">
    <molecule id="Q8IN81-4"/>
    <property type="protein sequence ID" value="FBpp0089358"/>
    <property type="gene ID" value="FBgn0004652"/>
</dbReference>
<dbReference type="EnsemblMetazoa" id="FBtr0083652">
    <molecule id="Q8IN81-4"/>
    <property type="protein sequence ID" value="FBpp0089359"/>
    <property type="gene ID" value="FBgn0004652"/>
</dbReference>
<dbReference type="GeneID" id="42226"/>
<dbReference type="KEGG" id="dme:Dmel_CG14307"/>
<dbReference type="UCSC" id="CG14307-RA">
    <property type="organism name" value="d. melanogaster"/>
</dbReference>
<dbReference type="AGR" id="FB:FBgn0004652"/>
<dbReference type="CTD" id="42226"/>
<dbReference type="FlyBase" id="FBgn0004652">
    <property type="gene designation" value="fru"/>
</dbReference>
<dbReference type="VEuPathDB" id="VectorBase:FBgn0004652"/>
<dbReference type="eggNOG" id="KOG1721">
    <property type="taxonomic scope" value="Eukaryota"/>
</dbReference>
<dbReference type="GeneTree" id="ENSGT00530000064321"/>
<dbReference type="HOGENOM" id="CLU_007991_0_0_1"/>
<dbReference type="InParanoid" id="Q8IN81"/>
<dbReference type="OMA" id="CHMAVAS"/>
<dbReference type="OrthoDB" id="5560627at2759"/>
<dbReference type="SignaLink" id="Q8IN81"/>
<dbReference type="BioGRID-ORCS" id="42226">
    <property type="hits" value="1 hit in 1 CRISPR screen"/>
</dbReference>
<dbReference type="GenomeRNAi" id="42226"/>
<dbReference type="PRO" id="PR:Q8IN81"/>
<dbReference type="Proteomes" id="UP000000803">
    <property type="component" value="Chromosome 3R"/>
</dbReference>
<dbReference type="Bgee" id="FBgn0004652">
    <property type="expression patterns" value="Expressed in dorsal appendage forming follicle cell in ovary and 257 other cell types or tissues"/>
</dbReference>
<dbReference type="ExpressionAtlas" id="Q8IN81">
    <property type="expression patterns" value="baseline and differential"/>
</dbReference>
<dbReference type="GO" id="GO:0005634">
    <property type="term" value="C:nucleus"/>
    <property type="evidence" value="ECO:0000318"/>
    <property type="project" value="GO_Central"/>
</dbReference>
<dbReference type="GO" id="GO:0003677">
    <property type="term" value="F:DNA binding"/>
    <property type="evidence" value="ECO:0007669"/>
    <property type="project" value="UniProtKB-KW"/>
</dbReference>
<dbReference type="GO" id="GO:0003700">
    <property type="term" value="F:DNA-binding transcription factor activity"/>
    <property type="evidence" value="ECO:0000304"/>
    <property type="project" value="FlyBase"/>
</dbReference>
<dbReference type="GO" id="GO:0008270">
    <property type="term" value="F:zinc ion binding"/>
    <property type="evidence" value="ECO:0007669"/>
    <property type="project" value="UniProtKB-KW"/>
</dbReference>
<dbReference type="GO" id="GO:0002118">
    <property type="term" value="P:aggressive behavior"/>
    <property type="evidence" value="ECO:0000315"/>
    <property type="project" value="FlyBase"/>
</dbReference>
<dbReference type="GO" id="GO:0016199">
    <property type="term" value="P:axon midline choice point recognition"/>
    <property type="evidence" value="ECO:0000315"/>
    <property type="project" value="FlyBase"/>
</dbReference>
<dbReference type="GO" id="GO:0007417">
    <property type="term" value="P:central nervous system development"/>
    <property type="evidence" value="ECO:0000315"/>
    <property type="project" value="FlyBase"/>
</dbReference>
<dbReference type="GO" id="GO:0021954">
    <property type="term" value="P:central nervous system neuron development"/>
    <property type="evidence" value="ECO:0000314"/>
    <property type="project" value="CACAO"/>
</dbReference>
<dbReference type="GO" id="GO:0007620">
    <property type="term" value="P:copulation"/>
    <property type="evidence" value="ECO:0000304"/>
    <property type="project" value="FlyBase"/>
</dbReference>
<dbReference type="GO" id="GO:0048813">
    <property type="term" value="P:dendrite morphogenesis"/>
    <property type="evidence" value="ECO:0000315"/>
    <property type="project" value="FlyBase"/>
</dbReference>
<dbReference type="GO" id="GO:0008049">
    <property type="term" value="P:male courtship behavior"/>
    <property type="evidence" value="ECO:0000315"/>
    <property type="project" value="FlyBase"/>
</dbReference>
<dbReference type="GO" id="GO:0016543">
    <property type="term" value="P:male courtship behavior, orientation prior to leg tapping and wing vibration"/>
    <property type="evidence" value="ECO:0000303"/>
    <property type="project" value="FlyBase"/>
</dbReference>
<dbReference type="GO" id="GO:0016544">
    <property type="term" value="P:male courtship behavior, tapping to detect pheromone"/>
    <property type="evidence" value="ECO:0000315"/>
    <property type="project" value="CACAO"/>
</dbReference>
<dbReference type="GO" id="GO:0048065">
    <property type="term" value="P:male courtship behavior, veined wing extension"/>
    <property type="evidence" value="ECO:0000315"/>
    <property type="project" value="CACAO"/>
</dbReference>
<dbReference type="GO" id="GO:0045433">
    <property type="term" value="P:male courtship behavior, veined wing generated song production"/>
    <property type="evidence" value="ECO:0000315"/>
    <property type="project" value="UniProtKB"/>
</dbReference>
<dbReference type="GO" id="GO:0016545">
    <property type="term" value="P:male courtship behavior, veined wing vibration"/>
    <property type="evidence" value="ECO:0000315"/>
    <property type="project" value="FlyBase"/>
</dbReference>
<dbReference type="GO" id="GO:0060179">
    <property type="term" value="P:male mating behavior"/>
    <property type="evidence" value="ECO:0000315"/>
    <property type="project" value="FlyBase"/>
</dbReference>
<dbReference type="GO" id="GO:0046661">
    <property type="term" value="P:male sex differentiation"/>
    <property type="evidence" value="ECO:0000304"/>
    <property type="project" value="FlyBase"/>
</dbReference>
<dbReference type="GO" id="GO:0007617">
    <property type="term" value="P:mating behavior"/>
    <property type="evidence" value="ECO:0000315"/>
    <property type="project" value="FlyBase"/>
</dbReference>
<dbReference type="GO" id="GO:0048047">
    <property type="term" value="P:mating behavior, sex discrimination"/>
    <property type="evidence" value="ECO:0000315"/>
    <property type="project" value="CACAO"/>
</dbReference>
<dbReference type="GO" id="GO:0007517">
    <property type="term" value="P:muscle organ development"/>
    <property type="evidence" value="ECO:0000315"/>
    <property type="project" value="UniProtKB"/>
</dbReference>
<dbReference type="GO" id="GO:0006357">
    <property type="term" value="P:regulation of transcription by RNA polymerase II"/>
    <property type="evidence" value="ECO:0000318"/>
    <property type="project" value="GO_Central"/>
</dbReference>
<dbReference type="GO" id="GO:0007530">
    <property type="term" value="P:sex determination"/>
    <property type="evidence" value="ECO:0000315"/>
    <property type="project" value="UniProtKB"/>
</dbReference>
<dbReference type="CDD" id="cd18315">
    <property type="entry name" value="BTB_POZ_BAB-like"/>
    <property type="match status" value="1"/>
</dbReference>
<dbReference type="FunFam" id="3.30.710.10:FF:000138">
    <property type="entry name" value="Fruitless, isoform N"/>
    <property type="match status" value="1"/>
</dbReference>
<dbReference type="Gene3D" id="3.30.160.60">
    <property type="entry name" value="Classic Zinc Finger"/>
    <property type="match status" value="1"/>
</dbReference>
<dbReference type="Gene3D" id="3.30.710.10">
    <property type="entry name" value="Potassium Channel Kv1.1, Chain A"/>
    <property type="match status" value="1"/>
</dbReference>
<dbReference type="InterPro" id="IPR000210">
    <property type="entry name" value="BTB/POZ_dom"/>
</dbReference>
<dbReference type="InterPro" id="IPR051095">
    <property type="entry name" value="Dros_DevTransReg"/>
</dbReference>
<dbReference type="InterPro" id="IPR011333">
    <property type="entry name" value="SKP1/BTB/POZ_sf"/>
</dbReference>
<dbReference type="InterPro" id="IPR036236">
    <property type="entry name" value="Znf_C2H2_sf"/>
</dbReference>
<dbReference type="InterPro" id="IPR013087">
    <property type="entry name" value="Znf_C2H2_type"/>
</dbReference>
<dbReference type="PANTHER" id="PTHR23110">
    <property type="entry name" value="BTB DOMAIN TRANSCRIPTION FACTOR"/>
    <property type="match status" value="1"/>
</dbReference>
<dbReference type="PANTHER" id="PTHR23110:SF107">
    <property type="entry name" value="SEX DETERMINATION PROTEIN FRUITLESS"/>
    <property type="match status" value="1"/>
</dbReference>
<dbReference type="Pfam" id="PF00651">
    <property type="entry name" value="BTB"/>
    <property type="match status" value="1"/>
</dbReference>
<dbReference type="SMART" id="SM00225">
    <property type="entry name" value="BTB"/>
    <property type="match status" value="1"/>
</dbReference>
<dbReference type="SMART" id="SM00355">
    <property type="entry name" value="ZnF_C2H2"/>
    <property type="match status" value="2"/>
</dbReference>
<dbReference type="SUPFAM" id="SSF57667">
    <property type="entry name" value="beta-beta-alpha zinc fingers"/>
    <property type="match status" value="1"/>
</dbReference>
<dbReference type="SUPFAM" id="SSF54695">
    <property type="entry name" value="POZ domain"/>
    <property type="match status" value="1"/>
</dbReference>
<dbReference type="PROSITE" id="PS50097">
    <property type="entry name" value="BTB"/>
    <property type="match status" value="1"/>
</dbReference>
<dbReference type="PROSITE" id="PS00028">
    <property type="entry name" value="ZINC_FINGER_C2H2_1"/>
    <property type="match status" value="1"/>
</dbReference>
<dbReference type="PROSITE" id="PS50157">
    <property type="entry name" value="ZINC_FINGER_C2H2_2"/>
    <property type="match status" value="1"/>
</dbReference>
<name>FRU_DROME</name>
<organism evidence="15">
    <name type="scientific">Drosophila melanogaster</name>
    <name type="common">Fruit fly</name>
    <dbReference type="NCBI Taxonomy" id="7227"/>
    <lineage>
        <taxon>Eukaryota</taxon>
        <taxon>Metazoa</taxon>
        <taxon>Ecdysozoa</taxon>
        <taxon>Arthropoda</taxon>
        <taxon>Hexapoda</taxon>
        <taxon>Insecta</taxon>
        <taxon>Pterygota</taxon>
        <taxon>Neoptera</taxon>
        <taxon>Endopterygota</taxon>
        <taxon>Diptera</taxon>
        <taxon>Brachycera</taxon>
        <taxon>Muscomorpha</taxon>
        <taxon>Ephydroidea</taxon>
        <taxon>Drosophilidae</taxon>
        <taxon>Drosophila</taxon>
        <taxon>Sophophora</taxon>
    </lineage>
</organism>
<comment type="function">
    <text evidence="4 5 6 7 8">Probably acts as a transcriptional regulator. Part of the somatic sex determination hierarchy; sex determination genes transformer (tra) and transformer-2 (tra-2) switch fru splicing from the male-specific pattern to the female-specific pattern through activation of the female-specific fru 5'-splice site. Vital for the development of males and females. Controls the development of the male specific abdominal muscle of Lawrence. Plays a role in male courtship behavior and sexual orientation. Enhances male-specific expression of takeout in brain-associated fat body.</text>
</comment>
<comment type="interaction">
    <interactant intactId="EBI-6171772">
        <id>Q8IN81-1</id>
    </interactant>
    <interactant intactId="EBI-3406250">
        <id>Q9VDK5</id>
        <label>bon</label>
    </interactant>
    <organismsDiffer>false</organismsDiffer>
    <experiments>2</experiments>
</comment>
<comment type="interaction">
    <interactant intactId="EBI-6171802">
        <id>Q8IN81-6</id>
    </interactant>
    <interactant intactId="EBI-3406250">
        <id>Q9VDK5</id>
        <label>bon</label>
    </interactant>
    <organismsDiffer>false</organismsDiffer>
    <experiments>4</experiments>
</comment>
<comment type="subcellular location">
    <subcellularLocation>
        <location evidence="14">Nucleus</location>
    </subcellularLocation>
</comment>
<comment type="alternative products">
    <event type="alternative splicing"/>
    <isoform>
        <id>Q8IN81-1</id>
        <name evidence="4">Male-A</name>
        <name evidence="9">E</name>
        <sequence type="displayed"/>
    </isoform>
    <isoform>
        <id>Q8IN81-4</id>
        <name evidence="4">Female-A</name>
        <name evidence="9">C</name>
        <name>L</name>
        <name>M</name>
        <sequence type="described" ref="VSP_050497"/>
    </isoform>
    <isoform>
        <id>Q8IN81-7</id>
        <name evidence="4">Female-B</name>
        <name evidence="9">F</name>
        <sequence type="described" ref="VSP_050497 VSP_050501 VSP_050505"/>
    </isoform>
    <isoform>
        <id>Q8IN81-10</id>
        <name evidence="4">Female-E</name>
        <name evidence="9">H</name>
        <sequence type="described" ref="VSP_050497 VSP_050500 VSP_050506"/>
    </isoform>
    <isoform>
        <id>Q8IN81-3</id>
        <name evidence="7">Female-I</name>
        <sequence type="described" ref="VSP_050497 VSP_050498 VSP_050501 VSP_050505"/>
    </isoform>
    <isoform>
        <id>Q8IN81-6</id>
        <name evidence="4">Male-B</name>
        <name evidence="9">B</name>
        <sequence type="described" ref="VSP_050501 VSP_050505"/>
    </isoform>
    <isoform>
        <id>Q8IN81-12</id>
        <name evidence="4">Male-E</name>
        <name>G</name>
        <sequence type="described" ref="VSP_050500 VSP_050506"/>
    </isoform>
    <isoform>
        <id>Q8IN81-2</id>
        <name evidence="7">Male-I</name>
        <sequence type="described" ref="VSP_050498 VSP_050501 VSP_050505"/>
    </isoform>
    <isoform>
        <id>Q8IN81-8</id>
        <name evidence="4">Type-C</name>
        <name evidence="9">D</name>
        <sequence type="described" ref="VSP_050497 VSP_050499 VSP_050504"/>
    </isoform>
    <isoform>
        <id>Q8IN81-9</id>
        <name evidence="4">Type-D</name>
        <name evidence="9">A</name>
        <sequence type="described" ref="VSP_050497 VSP_050502 VSP_050503"/>
    </isoform>
    <isoform>
        <id>Q8IN81-13</id>
        <name>I</name>
        <sequence type="described" ref="VSP_039397 VSP_039400"/>
    </isoform>
    <isoform>
        <id>Q8IN81-14</id>
        <name>J</name>
        <sequence type="described" ref="VSP_039398 VSP_039399"/>
    </isoform>
    <isoform>
        <id>Q8IN81-15</id>
        <name>K</name>
        <sequence type="described" ref="VSP_039396 VSP_039401 VSP_050500 VSP_050506"/>
    </isoform>
    <text evidence="4 7">Sex specific splicing is controlled by tra and tra-2. Sex-specific repression of the translation of fru mRNA might be mediated by the binding of Tra to the fru mRNA in females.</text>
</comment>
<comment type="tissue specificity">
    <text evidence="4 6 7">Expressed in parts of the adult male brain associated with the courtship song and steps of the male courtship. Also expressed in the larval and pupal male mushroom body and optic lobe. Expressed in pupal female optic lobe.</text>
</comment>
<comment type="disruption phenotype">
    <text evidence="7">Mutant males exhibit bisexual behavior; they court females but are behaviorally sterile so fail to mate and they exhibit vigorous courtship with other fru mutant males.</text>
</comment>
<protein>
    <recommendedName>
        <fullName>Sex determination protein fruitless</fullName>
    </recommendedName>
</protein>
<sequence>MMATSQDYFGNPYALFRGPPTTLRPRESPLGVGHPHGHGHLHSHAHAHGHGHAHSHYAALDLQTPHKRNIETDVRAPPPPLPPPPLPLPPASPRYNTDQGAMDQQFCLRWNNHPTNLTGVLTSLLQREALCDVTLACEGETVKAHQTILSACSPYFETIFLQNQHPHPIIYLKDVRYSEMRSLLDFMYKGEVNVGQSSLPMFLKTAESLQVRGLTDNNNLNYRSDCDKLRDSAASSPTGRGPSNYTGGLGGAGGVADAMRESRDSLRSRCERDLRDELTQRSSSSMSERSSAAAAAAAAAAAVAAAGGNVNAAAVALGLTTPTGGERSPSVGSASAAAAAAAVAAAVAAAANRSASADGCSDRGSERGTLERTDSRDDLLQLDYSNKDNNNSNSSSTGGNNNNNNNNNNNSSSNNNNSSSNRERNNSGERERERERERERDRDRELSTTPVEQLSSSKRRRKNSSSNCDNSLSSSHQDRHYPQDSQANFKSSPVPKTGGSTSESEDAGGRHDSPLSMTTSVHLGGGGGNVGAASALSGLSQSLSIKQELMDAQQQQQHREHHVALPPDYLPSAALKLHAEDMSTLLTQHALQAADARDEHNDAKQLQLDQTDNIDGRVKCFNIKHDRHPDRELDRNHREHDDDPGVIEEVVVDHVREMEAGNEHDPEEMKEAAYHATPPKYRRAVVYAPPHPDEEAASGSGSDIYVDGGYNCEYKCKELNMRAIRCSRQQHMMSHYSPHHPHHRSLIDCPAEAAYSPPVANNQAYLASNGAVQQLDLSTYHGHANHQLHQHPPSATHPSHSQSSPHYPSASGAGAGAGSVSVSIAGSASGSATSAPASVATSAVSPQPSSSSTGSTSSAAAVAAAAAAAANRRDHNIDYSTLFVQLSGTLPTLYRCVSCNKIVSNRWHHANIHRPQSHECPVCGQKFTRRDNMKAHCKIKHADIKDRFFSHYVHM</sequence>
<proteinExistence type="evidence at protein level"/>
<gene>
    <name type="primary">fru</name>
    <name type="synonym">BTB-VI</name>
    <name type="ORF">CG14307</name>
</gene>
<accession>Q8IN81</accession>
<accession>A4V334</accession>
<accession>O44708</accession>
<accession>P91618</accession>
<accession>P91619</accession>
<accession>Q24004</accession>
<accession>Q29QE0</accession>
<accession>Q7KSD2</accession>
<accession>Q7KSD5</accession>
<accession>Q7KSD6</accession>
<accession>Q8IN80</accession>
<accession>Q8IN82</accession>
<accession>Q8IN83</accession>
<accession>Q8IS35</accession>
<accession>Q8IS36</accession>
<accession>Q9GU18</accession>
<accession>Q9GU19</accession>
<accession>Q9GU20</accession>
<accession>Q9GU21</accession>
<accession>Q9GU22</accession>
<accession>Q9VE64</accession>
<accession>Q9VE65</accession>
<accession>Q9VE66</accession>
<accession>Q9VE67</accession>
<reference evidence="14" key="1">
    <citation type="journal article" date="1996" name="Cell">
        <title>Control of male sexual behavior and sexual orientation in Drosophila by the fruitless gene.</title>
        <authorList>
            <person name="Ryner L.C."/>
            <person name="Goodwin S.F."/>
            <person name="Castrillon D.H."/>
            <person name="Anand A."/>
            <person name="Villella A."/>
            <person name="Baker B.S."/>
            <person name="Hall J.C."/>
            <person name="Taylor B.J."/>
            <person name="Wasserman S.A."/>
        </authorList>
    </citation>
    <scope>NUCLEOTIDE SEQUENCE [MRNA] (ISOFORMS MALE-I AND FEMALE-I)</scope>
    <scope>FUNCTION</scope>
    <scope>TISSUE SPECIFICITY</scope>
    <scope>INTERACTION WITH TRA</scope>
    <scope>DISRUPTION PHENOTYPE</scope>
    <source>
        <strain>Oregon-R</strain>
    </source>
</reference>
<reference evidence="14" key="2">
    <citation type="journal article" date="1996" name="Proc. Natl. Acad. Sci. U.S.A.">
        <title>Sexual orientation in Drosophila is altered by the satori mutation in the sex-determination gene fruitless that encodes a zinc finger protein with a BTB domain.</title>
        <authorList>
            <person name="Ito H."/>
            <person name="Fujitani K."/>
            <person name="Usui K."/>
            <person name="Shimizu-Nishikawa K."/>
            <person name="Tanaka S."/>
            <person name="Yamamoto D."/>
        </authorList>
    </citation>
    <scope>NUCLEOTIDE SEQUENCE [MRNA] (ISOFORM FEMALE-A)</scope>
    <scope>FUNCTION</scope>
    <scope>TISSUE SPECIFICITY</scope>
    <source>
        <strain>Canton-S</strain>
        <tissue>Head</tissue>
    </source>
</reference>
<reference evidence="14" key="3">
    <citation type="journal article" date="2000" name="Nat. Cell Biol.">
        <title>Formation of the male-specific muscle in female Drosophila by ectopic fruitless expression.</title>
        <authorList>
            <person name="Usui-Aoki K."/>
            <person name="Ito H."/>
            <person name="Ui-Tei K."/>
            <person name="Takahashi K."/>
            <person name="Lukacsovich T."/>
            <person name="Awano W."/>
            <person name="Nakata H."/>
            <person name="Piao Z.F."/>
            <person name="Nilsson E.E."/>
            <person name="Tomida J.-Y."/>
            <person name="Yamamoto D."/>
        </authorList>
    </citation>
    <scope>NUCLEOTIDE SEQUENCE [MRNA] (ISOFORMS MALE-A; FEMALE-A; MALE-B; FEMALE-B; TYPE-C; TYPE-D; MALE-E AND FEMALE-E)</scope>
    <scope>FUNCTION</scope>
    <scope>TISSUE SPECIFICITY</scope>
    <scope>INTERACTION WITH TRA</scope>
    <source>
        <strain>Canton-S</strain>
        <tissue>Head</tissue>
    </source>
</reference>
<reference evidence="14" key="4">
    <citation type="journal article" date="2000" name="Science">
        <title>The genome sequence of Drosophila melanogaster.</title>
        <authorList>
            <person name="Adams M.D."/>
            <person name="Celniker S.E."/>
            <person name="Holt R.A."/>
            <person name="Evans C.A."/>
            <person name="Gocayne J.D."/>
            <person name="Amanatides P.G."/>
            <person name="Scherer S.E."/>
            <person name="Li P.W."/>
            <person name="Hoskins R.A."/>
            <person name="Galle R.F."/>
            <person name="George R.A."/>
            <person name="Lewis S.E."/>
            <person name="Richards S."/>
            <person name="Ashburner M."/>
            <person name="Henderson S.N."/>
            <person name="Sutton G.G."/>
            <person name="Wortman J.R."/>
            <person name="Yandell M.D."/>
            <person name="Zhang Q."/>
            <person name="Chen L.X."/>
            <person name="Brandon R.C."/>
            <person name="Rogers Y.-H.C."/>
            <person name="Blazej R.G."/>
            <person name="Champe M."/>
            <person name="Pfeiffer B.D."/>
            <person name="Wan K.H."/>
            <person name="Doyle C."/>
            <person name="Baxter E.G."/>
            <person name="Helt G."/>
            <person name="Nelson C.R."/>
            <person name="Miklos G.L.G."/>
            <person name="Abril J.F."/>
            <person name="Agbayani A."/>
            <person name="An H.-J."/>
            <person name="Andrews-Pfannkoch C."/>
            <person name="Baldwin D."/>
            <person name="Ballew R.M."/>
            <person name="Basu A."/>
            <person name="Baxendale J."/>
            <person name="Bayraktaroglu L."/>
            <person name="Beasley E.M."/>
            <person name="Beeson K.Y."/>
            <person name="Benos P.V."/>
            <person name="Berman B.P."/>
            <person name="Bhandari D."/>
            <person name="Bolshakov S."/>
            <person name="Borkova D."/>
            <person name="Botchan M.R."/>
            <person name="Bouck J."/>
            <person name="Brokstein P."/>
            <person name="Brottier P."/>
            <person name="Burtis K.C."/>
            <person name="Busam D.A."/>
            <person name="Butler H."/>
            <person name="Cadieu E."/>
            <person name="Center A."/>
            <person name="Chandra I."/>
            <person name="Cherry J.M."/>
            <person name="Cawley S."/>
            <person name="Dahlke C."/>
            <person name="Davenport L.B."/>
            <person name="Davies P."/>
            <person name="de Pablos B."/>
            <person name="Delcher A."/>
            <person name="Deng Z."/>
            <person name="Mays A.D."/>
            <person name="Dew I."/>
            <person name="Dietz S.M."/>
            <person name="Dodson K."/>
            <person name="Doup L.E."/>
            <person name="Downes M."/>
            <person name="Dugan-Rocha S."/>
            <person name="Dunkov B.C."/>
            <person name="Dunn P."/>
            <person name="Durbin K.J."/>
            <person name="Evangelista C.C."/>
            <person name="Ferraz C."/>
            <person name="Ferriera S."/>
            <person name="Fleischmann W."/>
            <person name="Fosler C."/>
            <person name="Gabrielian A.E."/>
            <person name="Garg N.S."/>
            <person name="Gelbart W.M."/>
            <person name="Glasser K."/>
            <person name="Glodek A."/>
            <person name="Gong F."/>
            <person name="Gorrell J.H."/>
            <person name="Gu Z."/>
            <person name="Guan P."/>
            <person name="Harris M."/>
            <person name="Harris N.L."/>
            <person name="Harvey D.A."/>
            <person name="Heiman T.J."/>
            <person name="Hernandez J.R."/>
            <person name="Houck J."/>
            <person name="Hostin D."/>
            <person name="Houston K.A."/>
            <person name="Howland T.J."/>
            <person name="Wei M.-H."/>
            <person name="Ibegwam C."/>
            <person name="Jalali M."/>
            <person name="Kalush F."/>
            <person name="Karpen G.H."/>
            <person name="Ke Z."/>
            <person name="Kennison J.A."/>
            <person name="Ketchum K.A."/>
            <person name="Kimmel B.E."/>
            <person name="Kodira C.D."/>
            <person name="Kraft C.L."/>
            <person name="Kravitz S."/>
            <person name="Kulp D."/>
            <person name="Lai Z."/>
            <person name="Lasko P."/>
            <person name="Lei Y."/>
            <person name="Levitsky A.A."/>
            <person name="Li J.H."/>
            <person name="Li Z."/>
            <person name="Liang Y."/>
            <person name="Lin X."/>
            <person name="Liu X."/>
            <person name="Mattei B."/>
            <person name="McIntosh T.C."/>
            <person name="McLeod M.P."/>
            <person name="McPherson D."/>
            <person name="Merkulov G."/>
            <person name="Milshina N.V."/>
            <person name="Mobarry C."/>
            <person name="Morris J."/>
            <person name="Moshrefi A."/>
            <person name="Mount S.M."/>
            <person name="Moy M."/>
            <person name="Murphy B."/>
            <person name="Murphy L."/>
            <person name="Muzny D.M."/>
            <person name="Nelson D.L."/>
            <person name="Nelson D.R."/>
            <person name="Nelson K.A."/>
            <person name="Nixon K."/>
            <person name="Nusskern D.R."/>
            <person name="Pacleb J.M."/>
            <person name="Palazzolo M."/>
            <person name="Pittman G.S."/>
            <person name="Pan S."/>
            <person name="Pollard J."/>
            <person name="Puri V."/>
            <person name="Reese M.G."/>
            <person name="Reinert K."/>
            <person name="Remington K."/>
            <person name="Saunders R.D.C."/>
            <person name="Scheeler F."/>
            <person name="Shen H."/>
            <person name="Shue B.C."/>
            <person name="Siden-Kiamos I."/>
            <person name="Simpson M."/>
            <person name="Skupski M.P."/>
            <person name="Smith T.J."/>
            <person name="Spier E."/>
            <person name="Spradling A.C."/>
            <person name="Stapleton M."/>
            <person name="Strong R."/>
            <person name="Sun E."/>
            <person name="Svirskas R."/>
            <person name="Tector C."/>
            <person name="Turner R."/>
            <person name="Venter E."/>
            <person name="Wang A.H."/>
            <person name="Wang X."/>
            <person name="Wang Z.-Y."/>
            <person name="Wassarman D.A."/>
            <person name="Weinstock G.M."/>
            <person name="Weissenbach J."/>
            <person name="Williams S.M."/>
            <person name="Woodage T."/>
            <person name="Worley K.C."/>
            <person name="Wu D."/>
            <person name="Yang S."/>
            <person name="Yao Q.A."/>
            <person name="Ye J."/>
            <person name="Yeh R.-F."/>
            <person name="Zaveri J.S."/>
            <person name="Zhan M."/>
            <person name="Zhang G."/>
            <person name="Zhao Q."/>
            <person name="Zheng L."/>
            <person name="Zheng X.H."/>
            <person name="Zhong F.N."/>
            <person name="Zhong W."/>
            <person name="Zhou X."/>
            <person name="Zhu S.C."/>
            <person name="Zhu X."/>
            <person name="Smith H.O."/>
            <person name="Gibbs R.A."/>
            <person name="Myers E.W."/>
            <person name="Rubin G.M."/>
            <person name="Venter J.C."/>
        </authorList>
    </citation>
    <scope>NUCLEOTIDE SEQUENCE [LARGE SCALE GENOMIC DNA]</scope>
    <source>
        <strain>Berkeley</strain>
    </source>
</reference>
<reference evidence="14" key="5">
    <citation type="journal article" date="2002" name="Genome Biol.">
        <title>Annotation of the Drosophila melanogaster euchromatic genome: a systematic review.</title>
        <authorList>
            <person name="Misra S."/>
            <person name="Crosby M.A."/>
            <person name="Mungall C.J."/>
            <person name="Matthews B.B."/>
            <person name="Campbell K.S."/>
            <person name="Hradecky P."/>
            <person name="Huang Y."/>
            <person name="Kaminker J.S."/>
            <person name="Millburn G.H."/>
            <person name="Prochnik S.E."/>
            <person name="Smith C.D."/>
            <person name="Tupy J.L."/>
            <person name="Whitfield E.J."/>
            <person name="Bayraktaroglu L."/>
            <person name="Berman B.P."/>
            <person name="Bettencourt B.R."/>
            <person name="Celniker S.E."/>
            <person name="de Grey A.D.N.J."/>
            <person name="Drysdale R.A."/>
            <person name="Harris N.L."/>
            <person name="Richter J."/>
            <person name="Russo S."/>
            <person name="Schroeder A.J."/>
            <person name="Shu S.Q."/>
            <person name="Stapleton M."/>
            <person name="Yamada C."/>
            <person name="Ashburner M."/>
            <person name="Gelbart W.M."/>
            <person name="Rubin G.M."/>
            <person name="Lewis S.E."/>
        </authorList>
    </citation>
    <scope>GENOME REANNOTATION</scope>
    <scope>ALTERNATIVE SPLICING</scope>
    <source>
        <strain>Berkeley</strain>
    </source>
</reference>
<reference key="6">
    <citation type="submission" date="2006-01" db="EMBL/GenBank/DDBJ databases">
        <authorList>
            <person name="Stapleton M."/>
            <person name="Carlson J.W."/>
            <person name="Chavez C."/>
            <person name="Frise E."/>
            <person name="George R.A."/>
            <person name="Pacleb J.M."/>
            <person name="Park S."/>
            <person name="Wan K.H."/>
            <person name="Yu C."/>
            <person name="Celniker S.E."/>
        </authorList>
    </citation>
    <scope>NUCLEOTIDE SEQUENCE [LARGE SCALE MRNA] (ISOFORM MALE-A)</scope>
    <source>
        <strain>Berkeley</strain>
        <tissue>Head</tissue>
    </source>
</reference>
<reference key="7">
    <citation type="journal article" date="2001" name="Dros. Info. Service">
        <title>Genomic structure of the fruitless gene in Drosophila melanogaster.</title>
        <authorList>
            <person name="Davis T."/>
            <person name="Ito H."/>
        </authorList>
    </citation>
    <scope>NUCLEOTIDE SEQUENCE [MRNA] OF 1-210 (ISOFORMS J AND FEMALE-I/FEMALE-A/TYPE-D/TYPE-C/FEMALE-B/FEMALE-E)</scope>
</reference>
<reference evidence="14" key="8">
    <citation type="journal article" date="1994" name="Proc. Natl. Acad. Sci. U.S.A.">
        <title>The BTB domain, found primarily in zinc finger proteins, defines an evolutionarily conserved family that includes several developmentally regulated genes in Drosophila.</title>
        <authorList>
            <person name="Zollman S."/>
            <person name="Godt D."/>
            <person name="Prive G.G."/>
            <person name="Couderc J.-L."/>
            <person name="Laski F.A."/>
        </authorList>
    </citation>
    <scope>NUCLEOTIDE SEQUENCE [GENOMIC DNA] OF 104-218</scope>
</reference>
<reference key="9">
    <citation type="journal article" date="1998" name="Mol. Cell. Biol.">
        <title>Regulation of sex-specific selection of fruitless 5' splice sites by transformer and transformer-2.</title>
        <authorList>
            <person name="Heinrichs V."/>
            <person name="Ryner L.C."/>
            <person name="Baker B.S."/>
        </authorList>
    </citation>
    <scope>FUNCTION</scope>
</reference>
<reference key="10">
    <citation type="journal article" date="2002" name="Genes Dev.">
        <title>The Drosophila takeout gene is regulated by the somatic sex-determination pathway and affects male courtship behavior.</title>
        <authorList>
            <person name="Dauwalder B."/>
            <person name="Tsujimoto S."/>
            <person name="Moss J."/>
            <person name="Mattox W."/>
        </authorList>
    </citation>
    <scope>FUNCTION</scope>
    <source>
        <strain>Canton-S</strain>
    </source>
</reference>
<evidence type="ECO:0000255" key="1">
    <source>
        <dbReference type="PROSITE-ProRule" id="PRU00037"/>
    </source>
</evidence>
<evidence type="ECO:0000255" key="2">
    <source>
        <dbReference type="PROSITE-ProRule" id="PRU00042"/>
    </source>
</evidence>
<evidence type="ECO:0000256" key="3">
    <source>
        <dbReference type="SAM" id="MobiDB-lite"/>
    </source>
</evidence>
<evidence type="ECO:0000269" key="4">
    <source>
    </source>
</evidence>
<evidence type="ECO:0000269" key="5">
    <source>
    </source>
</evidence>
<evidence type="ECO:0000269" key="6">
    <source>
    </source>
</evidence>
<evidence type="ECO:0000269" key="7">
    <source>
    </source>
</evidence>
<evidence type="ECO:0000269" key="8">
    <source>
    </source>
</evidence>
<evidence type="ECO:0000303" key="9">
    <source>
    </source>
</evidence>
<evidence type="ECO:0000303" key="10">
    <source>
    </source>
</evidence>
<evidence type="ECO:0000303" key="11">
    <source>
    </source>
</evidence>
<evidence type="ECO:0000303" key="12">
    <source>
    </source>
</evidence>
<evidence type="ECO:0000303" key="13">
    <source ref="7"/>
</evidence>
<evidence type="ECO:0000305" key="14"/>
<evidence type="ECO:0000312" key="15">
    <source>
        <dbReference type="EMBL" id="AAN13776.1"/>
    </source>
</evidence>
<keyword id="KW-0025">Alternative splicing</keyword>
<keyword id="KW-0217">Developmental protein</keyword>
<keyword id="KW-0238">DNA-binding</keyword>
<keyword id="KW-0479">Metal-binding</keyword>
<keyword id="KW-0539">Nucleus</keyword>
<keyword id="KW-1185">Reference proteome</keyword>
<keyword id="KW-0804">Transcription</keyword>
<keyword id="KW-0805">Transcription regulation</keyword>
<keyword id="KW-0862">Zinc</keyword>
<keyword id="KW-0863">Zinc-finger</keyword>
<feature type="chain" id="PRO_0000046921" description="Sex determination protein fruitless">
    <location>
        <begin position="1"/>
        <end position="955"/>
    </location>
</feature>
<feature type="domain" description="BTB" evidence="1 14">
    <location>
        <begin position="131"/>
        <end position="196"/>
    </location>
</feature>
<feature type="zinc finger region" description="C2H2-type" evidence="2">
    <location>
        <begin position="918"/>
        <end position="941"/>
    </location>
</feature>
<feature type="region of interest" description="Disordered" evidence="3">
    <location>
        <begin position="1"/>
        <end position="55"/>
    </location>
</feature>
<feature type="region of interest" description="Disordered" evidence="3">
    <location>
        <begin position="70"/>
        <end position="89"/>
    </location>
</feature>
<feature type="region of interest" description="Disordered" evidence="3">
    <location>
        <begin position="229"/>
        <end position="288"/>
    </location>
</feature>
<feature type="region of interest" description="Disordered" evidence="3">
    <location>
        <begin position="352"/>
        <end position="526"/>
    </location>
</feature>
<feature type="region of interest" description="Disordered" evidence="3">
    <location>
        <begin position="784"/>
        <end position="814"/>
    </location>
</feature>
<feature type="compositionally biased region" description="Basic residues" evidence="3">
    <location>
        <begin position="35"/>
        <end position="55"/>
    </location>
</feature>
<feature type="compositionally biased region" description="Pro residues" evidence="3">
    <location>
        <begin position="76"/>
        <end position="89"/>
    </location>
</feature>
<feature type="compositionally biased region" description="Polar residues" evidence="3">
    <location>
        <begin position="233"/>
        <end position="246"/>
    </location>
</feature>
<feature type="compositionally biased region" description="Basic and acidic residues" evidence="3">
    <location>
        <begin position="258"/>
        <end position="279"/>
    </location>
</feature>
<feature type="compositionally biased region" description="Basic and acidic residues" evidence="3">
    <location>
        <begin position="360"/>
        <end position="379"/>
    </location>
</feature>
<feature type="compositionally biased region" description="Low complexity" evidence="3">
    <location>
        <begin position="387"/>
        <end position="420"/>
    </location>
</feature>
<feature type="compositionally biased region" description="Basic and acidic residues" evidence="3">
    <location>
        <begin position="421"/>
        <end position="446"/>
    </location>
</feature>
<feature type="compositionally biased region" description="Low complexity" evidence="3">
    <location>
        <begin position="464"/>
        <end position="475"/>
    </location>
</feature>
<feature type="compositionally biased region" description="Low complexity" evidence="3">
    <location>
        <begin position="790"/>
        <end position="814"/>
    </location>
</feature>
<feature type="splice variant" id="VSP_050497" description="In isoform Female-I, isoform Female-A, isoform Type-D, isoform Type-C, isoform Female-B and isoform Female-E." evidence="10 11 12">
    <location>
        <begin position="1"/>
        <end position="101"/>
    </location>
</feature>
<feature type="splice variant" id="VSP_039396" description="In isoform K." evidence="14">
    <location>
        <begin position="1"/>
        <end position="91"/>
    </location>
</feature>
<feature type="splice variant" id="VSP_039397" description="In isoform I." evidence="14">
    <location>
        <begin position="1"/>
        <end position="85"/>
    </location>
</feature>
<feature type="splice variant" id="VSP_039398" description="In isoform J." evidence="13">
    <location>
        <begin position="3"/>
        <end position="51"/>
    </location>
</feature>
<feature type="splice variant" id="VSP_039399" description="In isoform J." evidence="13">
    <original>HAHSHYAALDLQTPHKRNIETDVRAPPPPLPPPPLPLPPASPR</original>
    <variation>SRISRNIDSASCLACPTCITCPTGPAFPICHIRRPPLDALPLW</variation>
    <location>
        <begin position="52"/>
        <end position="94"/>
    </location>
</feature>
<feature type="splice variant" id="VSP_039400" description="In isoform I." evidence="14">
    <original>LPLPPASPR</original>
    <variation>MLQKNSVRK</variation>
    <location>
        <begin position="86"/>
        <end position="94"/>
    </location>
</feature>
<feature type="splice variant" id="VSP_039401" description="In isoform K." evidence="14">
    <original>SP</original>
    <variation>MT</variation>
    <location>
        <begin position="92"/>
        <end position="93"/>
    </location>
</feature>
<feature type="splice variant" id="VSP_050498" description="In isoform Female-I and isoform Male-I." evidence="12">
    <location>
        <begin position="324"/>
        <end position="336"/>
    </location>
</feature>
<feature type="splice variant" id="VSP_050499" description="In isoform Type-C." evidence="10">
    <original>SAALKLHAEDMSTLLTQHALQAADARDEHNDAKQLQLDQTDNIDGRVKCFNIKHDRHPDRELDRNHREHDDDPGVIEEVVVDHVREMEAGNEHDPEEMKEAAYHATPPKYRRAVVYAPPHPDEEAASGSGSDIYVDGGYNCEYKCKELNMRAIRCSRQQHMMSHYSPHHPHHRSLIDCPAEAAYSPPVANNQAYL</original>
    <variation>VKKSEAFLGSTGNKSMHQMLLHQAVEAQLKSFQLHYQNEGLDSAMHRLLAQQQQHQEQQQQHQQQPHHSLGKSQSPAIPSGSAGGSSRKSGRFRANWLYQFEWLQYDERANTMFCRHCRKWSGELADIRTSFVEGNSNFRLEIVNHHNKCKSHRMCYERELQEQQQHPMPSGSAGGSSKRRSPEIITINVGKNSA</variation>
    <location>
        <begin position="572"/>
        <end position="766"/>
    </location>
</feature>
<feature type="splice variant" id="VSP_050500" description="In isoform Female-E, isoform K and isoform Male-E." evidence="10">
    <original>RVKCFNIKHDRHPDRELDRNHREHDDDPGVIEEVVVDHVREMEAGNEHDPEEMKEAAYHATPPKYRRAVVYAPPHPDEEAASGSGSDIYVDGGYNCEYKCKELNMRAIRCSRQQHMMSHYSPHHPHHRSLIDCPAEAAYSPPVANNQAYLASNGAVQQLDLSTYHGHANHQLHQHPPSAT</original>
    <variation>SKAWHMRLTFERLSGGCNLHRCKLCGKVVTHIRNHYHVHFPGRFECPLCRATYTRSDNLRTHCKFKHPMYNPDTRKFDNLMSSSAVGAAATPTASQLAVASQAAMAAAAAAAFNAAQQQQQQQQQQQQHQHQQQQQHQQSQQQQQQQQQSQQQLHALAQQHMLQLQPQHHQQQQHNATSE</variation>
    <location>
        <begin position="617"/>
        <end position="796"/>
    </location>
</feature>
<feature type="splice variant" id="VSP_050501" description="In isoform Female-I, isoform Male-I, isoform Female-B and isoform Male-B." evidence="10 12">
    <original>RVKCFNIKHDRHPDRELDRNHREHDDDPGVIEEVVVDHVREMEAGNEHDPEEMKEAAYHATPPKYRRAVVYAPPHPDEEAASGSGSDIYVDGGYNCEYKCKELNMRAIRCSRQQHMMSHYSPHHPHHRSLIDCPAEAAYSPPVANNQAYLASNGAVQQLDLSTYHGHANHQLH</original>
    <variation>SSARHHLSTPLSTSSSASPPPPPFGMHLSAALKREYHPLHYMAAGNGHNGPSALGYGNQGSGNAPNSAGGAGSVAGGVGAGGGAGGATGAAGHNSHHTMSYHNMFTPSRDPGTMWRCRSCGKEVTNRWHHFHSHTAQRSMCPYCPATYSRIDTLRSHLRVKHPDRLLKLNSSI</variation>
    <location>
        <begin position="617"/>
        <end position="789"/>
    </location>
</feature>
<feature type="splice variant" id="VSP_050502" description="In isoform Type-D." evidence="10">
    <original>R</original>
    <variation>E</variation>
    <location>
        <position position="617"/>
    </location>
</feature>
<feature type="splice variant" id="VSP_050503" description="In isoform Type-D." evidence="10">
    <location>
        <begin position="618"/>
        <end position="955"/>
    </location>
</feature>
<feature type="splice variant" id="VSP_050504" description="In isoform Type-C." evidence="10">
    <location>
        <begin position="767"/>
        <end position="955"/>
    </location>
</feature>
<feature type="splice variant" id="VSP_050505" description="In isoform Female-I, isoform Male-I, isoform Female-B and isoform Male-B." evidence="10 12">
    <location>
        <begin position="790"/>
        <end position="955"/>
    </location>
</feature>
<feature type="splice variant" id="VSP_050506" description="In isoform Female-E, isoform K and isoform Male-E." evidence="10">
    <location>
        <begin position="797"/>
        <end position="955"/>
    </location>
</feature>
<feature type="sequence conflict" description="In Ref. 6; ABC86512." evidence="14" ref="6">
    <original>P</original>
    <variation>PSLQIS</variation>
    <location>
        <position position="93"/>
    </location>
</feature>
<feature type="sequence conflict" description="In Ref. 8; AAA50838." evidence="14" ref="8">
    <original>C</original>
    <variation>S</variation>
    <location>
        <position position="107"/>
    </location>
</feature>
<feature type="sequence conflict" description="In Ref. 3; BAA12664." evidence="14" ref="3">
    <original>C</original>
    <variation>R</variation>
    <location>
        <position position="131"/>
    </location>
</feature>
<feature type="sequence conflict" description="In Ref. 8; AAA50838." evidence="14" ref="8">
    <original>RGLTDNN</original>
    <variation>CANQGSI</variation>
    <location>
        <begin position="212"/>
        <end position="218"/>
    </location>
</feature>
<feature type="sequence conflict" description="In Ref. 2; AAB92662 and 3; BAA12663/BAA12664." evidence="14" ref="2 3">
    <original>RA</original>
    <variation>QRN</variation>
    <location>
        <begin position="722"/>
        <end position="723"/>
    </location>
</feature>
<feature type="sequence conflict" description="In Ref. 3; AAG28589." evidence="14" ref="3">
    <original>T</original>
    <variation>A</variation>
    <location sequence="Q8IN81-7">
        <position position="650"/>
    </location>
</feature>
<feature type="sequence conflict" description="In Ref. 3; AAG28590." evidence="14" ref="3">
    <original>S</original>
    <variation>P</variation>
    <location sequence="Q8IN81-8">
        <position position="539"/>
    </location>
</feature>
<feature type="sequence conflict" description="In Ref. 3; AAG28590." evidence="14" ref="3">
    <original>H</original>
    <variation>R</variation>
    <location sequence="Q8IN81-8">
        <position position="617"/>
    </location>
</feature>